<sequence>MFPDLAADLKAAMPDLRGRLLGNEPLAPLTWFRVGGPAQVLFTPADEDDLGYFLSLLPAEVPVLCIGVGSNLIVRDGGLPGVVIRLAPRGFGEARSDGETVHAGAAALDKRVAETAAAAQLGGLEFYFGIPGTIGGALRMNAGANGRETRDVLIDATAVDRAGRRHVIDLAGMQFSYRSSGADPSLIFTSARFRGTPASPDAIRAKMNEVQAHRELAQPIREKTGGSTFKNPPGHSAWKLIDAAGCRGLRIGGAQVSEMHCNFLINIGDATAADIETLGETVRERVKAQSGIELQWEIKRIGVTAGIAG</sequence>
<feature type="chain" id="PRO_0000332496" description="UDP-N-acetylenolpyruvoylglucosamine reductase">
    <location>
        <begin position="1"/>
        <end position="309"/>
    </location>
</feature>
<feature type="domain" description="FAD-binding PCMH-type" evidence="1">
    <location>
        <begin position="33"/>
        <end position="198"/>
    </location>
</feature>
<feature type="active site" evidence="1">
    <location>
        <position position="178"/>
    </location>
</feature>
<feature type="active site" description="Proton donor" evidence="1">
    <location>
        <position position="227"/>
    </location>
</feature>
<feature type="active site" evidence="1">
    <location>
        <position position="297"/>
    </location>
</feature>
<name>MURB_RHOP2</name>
<evidence type="ECO:0000255" key="1">
    <source>
        <dbReference type="HAMAP-Rule" id="MF_00037"/>
    </source>
</evidence>
<organism>
    <name type="scientific">Rhodopseudomonas palustris (strain HaA2)</name>
    <dbReference type="NCBI Taxonomy" id="316058"/>
    <lineage>
        <taxon>Bacteria</taxon>
        <taxon>Pseudomonadati</taxon>
        <taxon>Pseudomonadota</taxon>
        <taxon>Alphaproteobacteria</taxon>
        <taxon>Hyphomicrobiales</taxon>
        <taxon>Nitrobacteraceae</taxon>
        <taxon>Rhodopseudomonas</taxon>
    </lineage>
</organism>
<keyword id="KW-0131">Cell cycle</keyword>
<keyword id="KW-0132">Cell division</keyword>
<keyword id="KW-0133">Cell shape</keyword>
<keyword id="KW-0961">Cell wall biogenesis/degradation</keyword>
<keyword id="KW-0963">Cytoplasm</keyword>
<keyword id="KW-0274">FAD</keyword>
<keyword id="KW-0285">Flavoprotein</keyword>
<keyword id="KW-0521">NADP</keyword>
<keyword id="KW-0560">Oxidoreductase</keyword>
<keyword id="KW-0573">Peptidoglycan synthesis</keyword>
<keyword id="KW-1185">Reference proteome</keyword>
<protein>
    <recommendedName>
        <fullName evidence="1">UDP-N-acetylenolpyruvoylglucosamine reductase</fullName>
        <ecNumber evidence="1">1.3.1.98</ecNumber>
    </recommendedName>
    <alternativeName>
        <fullName evidence="1">UDP-N-acetylmuramate dehydrogenase</fullName>
    </alternativeName>
</protein>
<dbReference type="EC" id="1.3.1.98" evidence="1"/>
<dbReference type="EMBL" id="CP000250">
    <property type="protein sequence ID" value="ABD06706.1"/>
    <property type="molecule type" value="Genomic_DNA"/>
</dbReference>
<dbReference type="SMR" id="Q2IYK4"/>
<dbReference type="STRING" id="316058.RPB_1998"/>
<dbReference type="KEGG" id="rpb:RPB_1998"/>
<dbReference type="eggNOG" id="COG0812">
    <property type="taxonomic scope" value="Bacteria"/>
</dbReference>
<dbReference type="HOGENOM" id="CLU_035304_1_0_5"/>
<dbReference type="UniPathway" id="UPA00219"/>
<dbReference type="Proteomes" id="UP000008809">
    <property type="component" value="Chromosome"/>
</dbReference>
<dbReference type="GO" id="GO:0005829">
    <property type="term" value="C:cytosol"/>
    <property type="evidence" value="ECO:0007669"/>
    <property type="project" value="TreeGrafter"/>
</dbReference>
<dbReference type="GO" id="GO:0071949">
    <property type="term" value="F:FAD binding"/>
    <property type="evidence" value="ECO:0007669"/>
    <property type="project" value="InterPro"/>
</dbReference>
<dbReference type="GO" id="GO:0008762">
    <property type="term" value="F:UDP-N-acetylmuramate dehydrogenase activity"/>
    <property type="evidence" value="ECO:0007669"/>
    <property type="project" value="UniProtKB-UniRule"/>
</dbReference>
<dbReference type="GO" id="GO:0051301">
    <property type="term" value="P:cell division"/>
    <property type="evidence" value="ECO:0007669"/>
    <property type="project" value="UniProtKB-KW"/>
</dbReference>
<dbReference type="GO" id="GO:0071555">
    <property type="term" value="P:cell wall organization"/>
    <property type="evidence" value="ECO:0007669"/>
    <property type="project" value="UniProtKB-KW"/>
</dbReference>
<dbReference type="GO" id="GO:0009252">
    <property type="term" value="P:peptidoglycan biosynthetic process"/>
    <property type="evidence" value="ECO:0007669"/>
    <property type="project" value="UniProtKB-UniRule"/>
</dbReference>
<dbReference type="GO" id="GO:0008360">
    <property type="term" value="P:regulation of cell shape"/>
    <property type="evidence" value="ECO:0007669"/>
    <property type="project" value="UniProtKB-KW"/>
</dbReference>
<dbReference type="Gene3D" id="3.30.465.10">
    <property type="match status" value="1"/>
</dbReference>
<dbReference type="Gene3D" id="3.90.78.10">
    <property type="entry name" value="UDP-N-acetylenolpyruvoylglucosamine reductase, C-terminal domain"/>
    <property type="match status" value="1"/>
</dbReference>
<dbReference type="Gene3D" id="3.30.43.10">
    <property type="entry name" value="Uridine Diphospho-n-acetylenolpyruvylglucosamine Reductase, domain 2"/>
    <property type="match status" value="1"/>
</dbReference>
<dbReference type="HAMAP" id="MF_00037">
    <property type="entry name" value="MurB"/>
    <property type="match status" value="1"/>
</dbReference>
<dbReference type="InterPro" id="IPR016166">
    <property type="entry name" value="FAD-bd_PCMH"/>
</dbReference>
<dbReference type="InterPro" id="IPR036318">
    <property type="entry name" value="FAD-bd_PCMH-like_sf"/>
</dbReference>
<dbReference type="InterPro" id="IPR016167">
    <property type="entry name" value="FAD-bd_PCMH_sub1"/>
</dbReference>
<dbReference type="InterPro" id="IPR016169">
    <property type="entry name" value="FAD-bd_PCMH_sub2"/>
</dbReference>
<dbReference type="InterPro" id="IPR003170">
    <property type="entry name" value="MurB"/>
</dbReference>
<dbReference type="InterPro" id="IPR011601">
    <property type="entry name" value="MurB_C"/>
</dbReference>
<dbReference type="InterPro" id="IPR036635">
    <property type="entry name" value="MurB_C_sf"/>
</dbReference>
<dbReference type="InterPro" id="IPR006094">
    <property type="entry name" value="Oxid_FAD_bind_N"/>
</dbReference>
<dbReference type="NCBIfam" id="TIGR00179">
    <property type="entry name" value="murB"/>
    <property type="match status" value="1"/>
</dbReference>
<dbReference type="NCBIfam" id="NF010480">
    <property type="entry name" value="PRK13905.1"/>
    <property type="match status" value="1"/>
</dbReference>
<dbReference type="PANTHER" id="PTHR21071">
    <property type="entry name" value="UDP-N-ACETYLENOLPYRUVOYLGLUCOSAMINE REDUCTASE"/>
    <property type="match status" value="1"/>
</dbReference>
<dbReference type="PANTHER" id="PTHR21071:SF4">
    <property type="entry name" value="UDP-N-ACETYLENOLPYRUVOYLGLUCOSAMINE REDUCTASE"/>
    <property type="match status" value="1"/>
</dbReference>
<dbReference type="Pfam" id="PF01565">
    <property type="entry name" value="FAD_binding_4"/>
    <property type="match status" value="1"/>
</dbReference>
<dbReference type="Pfam" id="PF02873">
    <property type="entry name" value="MurB_C"/>
    <property type="match status" value="1"/>
</dbReference>
<dbReference type="SUPFAM" id="SSF56176">
    <property type="entry name" value="FAD-binding/transporter-associated domain-like"/>
    <property type="match status" value="1"/>
</dbReference>
<dbReference type="SUPFAM" id="SSF56194">
    <property type="entry name" value="Uridine diphospho-N-Acetylenolpyruvylglucosamine reductase, MurB, C-terminal domain"/>
    <property type="match status" value="1"/>
</dbReference>
<dbReference type="PROSITE" id="PS51387">
    <property type="entry name" value="FAD_PCMH"/>
    <property type="match status" value="1"/>
</dbReference>
<reference key="1">
    <citation type="submission" date="2006-01" db="EMBL/GenBank/DDBJ databases">
        <title>Complete sequence of Rhodopseudomonas palustris HaA2.</title>
        <authorList>
            <consortium name="US DOE Joint Genome Institute"/>
            <person name="Copeland A."/>
            <person name="Lucas S."/>
            <person name="Lapidus A."/>
            <person name="Barry K."/>
            <person name="Detter J.C."/>
            <person name="Glavina T."/>
            <person name="Hammon N."/>
            <person name="Israni S."/>
            <person name="Pitluck S."/>
            <person name="Chain P."/>
            <person name="Malfatti S."/>
            <person name="Shin M."/>
            <person name="Vergez L."/>
            <person name="Schmutz J."/>
            <person name="Larimer F."/>
            <person name="Land M."/>
            <person name="Hauser L."/>
            <person name="Pelletier D.A."/>
            <person name="Kyrpides N."/>
            <person name="Anderson I."/>
            <person name="Oda Y."/>
            <person name="Harwood C.S."/>
            <person name="Richardson P."/>
        </authorList>
    </citation>
    <scope>NUCLEOTIDE SEQUENCE [LARGE SCALE GENOMIC DNA]</scope>
    <source>
        <strain>HaA2</strain>
    </source>
</reference>
<gene>
    <name evidence="1" type="primary">murB</name>
    <name type="ordered locus">RPB_1998</name>
</gene>
<comment type="function">
    <text evidence="1">Cell wall formation.</text>
</comment>
<comment type="catalytic activity">
    <reaction evidence="1">
        <text>UDP-N-acetyl-alpha-D-muramate + NADP(+) = UDP-N-acetyl-3-O-(1-carboxyvinyl)-alpha-D-glucosamine + NADPH + H(+)</text>
        <dbReference type="Rhea" id="RHEA:12248"/>
        <dbReference type="ChEBI" id="CHEBI:15378"/>
        <dbReference type="ChEBI" id="CHEBI:57783"/>
        <dbReference type="ChEBI" id="CHEBI:58349"/>
        <dbReference type="ChEBI" id="CHEBI:68483"/>
        <dbReference type="ChEBI" id="CHEBI:70757"/>
        <dbReference type="EC" id="1.3.1.98"/>
    </reaction>
</comment>
<comment type="cofactor">
    <cofactor evidence="1">
        <name>FAD</name>
        <dbReference type="ChEBI" id="CHEBI:57692"/>
    </cofactor>
</comment>
<comment type="pathway">
    <text evidence="1">Cell wall biogenesis; peptidoglycan biosynthesis.</text>
</comment>
<comment type="subcellular location">
    <subcellularLocation>
        <location evidence="1">Cytoplasm</location>
    </subcellularLocation>
</comment>
<comment type="similarity">
    <text evidence="1">Belongs to the MurB family.</text>
</comment>
<accession>Q2IYK4</accession>
<proteinExistence type="inferred from homology"/>